<feature type="chain" id="PRO_0000103576" description="Probable transport protein MmpL10">
    <location>
        <begin position="1"/>
        <end position="1008"/>
    </location>
</feature>
<feature type="transmembrane region" description="Helical" evidence="1">
    <location>
        <begin position="23"/>
        <end position="43"/>
    </location>
</feature>
<feature type="transmembrane region" description="Helical" evidence="1">
    <location>
        <begin position="202"/>
        <end position="222"/>
    </location>
</feature>
<feature type="transmembrane region" description="Helical" evidence="1">
    <location>
        <begin position="225"/>
        <end position="245"/>
    </location>
</feature>
<feature type="transmembrane region" description="Helical" evidence="1">
    <location>
        <begin position="257"/>
        <end position="277"/>
    </location>
</feature>
<feature type="transmembrane region" description="Helical" evidence="1">
    <location>
        <begin position="301"/>
        <end position="321"/>
    </location>
</feature>
<feature type="transmembrane region" description="Helical" evidence="1">
    <location>
        <begin position="340"/>
        <end position="360"/>
    </location>
</feature>
<feature type="transmembrane region" description="Helical" evidence="1">
    <location>
        <begin position="389"/>
        <end position="409"/>
    </location>
</feature>
<feature type="transmembrane region" description="Helical" evidence="1">
    <location>
        <begin position="835"/>
        <end position="855"/>
    </location>
</feature>
<feature type="transmembrane region" description="Helical" evidence="1">
    <location>
        <begin position="862"/>
        <end position="882"/>
    </location>
</feature>
<feature type="transmembrane region" description="Helical" evidence="1">
    <location>
        <begin position="895"/>
        <end position="915"/>
    </location>
</feature>
<feature type="transmembrane region" description="Helical" evidence="1">
    <location>
        <begin position="940"/>
        <end position="960"/>
    </location>
</feature>
<feature type="transmembrane region" description="Helical" evidence="1">
    <location>
        <begin position="961"/>
        <end position="981"/>
    </location>
</feature>
<evidence type="ECO:0000255" key="1"/>
<evidence type="ECO:0000305" key="2"/>
<gene>
    <name type="primary">mmpL10</name>
    <name type="synonym">tp1</name>
    <name type="ordered locus">ML1231</name>
    <name type="ORF">B1170_C1_181</name>
</gene>
<keyword id="KW-1003">Cell membrane</keyword>
<keyword id="KW-0472">Membrane</keyword>
<keyword id="KW-1185">Reference proteome</keyword>
<keyword id="KW-0812">Transmembrane</keyword>
<keyword id="KW-1133">Transmembrane helix</keyword>
<keyword id="KW-0813">Transport</keyword>
<reference key="1">
    <citation type="submission" date="1994-03" db="EMBL/GenBank/DDBJ databases">
        <authorList>
            <person name="Smith D.R."/>
            <person name="Robison K."/>
        </authorList>
    </citation>
    <scope>NUCLEOTIDE SEQUENCE [GENOMIC DNA]</scope>
</reference>
<reference key="2">
    <citation type="journal article" date="2001" name="Nature">
        <title>Massive gene decay in the leprosy bacillus.</title>
        <authorList>
            <person name="Cole S.T."/>
            <person name="Eiglmeier K."/>
            <person name="Parkhill J."/>
            <person name="James K.D."/>
            <person name="Thomson N.R."/>
            <person name="Wheeler P.R."/>
            <person name="Honore N."/>
            <person name="Garnier T."/>
            <person name="Churcher C.M."/>
            <person name="Harris D.E."/>
            <person name="Mungall K.L."/>
            <person name="Basham D."/>
            <person name="Brown D."/>
            <person name="Chillingworth T."/>
            <person name="Connor R."/>
            <person name="Davies R.M."/>
            <person name="Devlin K."/>
            <person name="Duthoy S."/>
            <person name="Feltwell T."/>
            <person name="Fraser A."/>
            <person name="Hamlin N."/>
            <person name="Holroyd S."/>
            <person name="Hornsby T."/>
            <person name="Jagels K."/>
            <person name="Lacroix C."/>
            <person name="Maclean J."/>
            <person name="Moule S."/>
            <person name="Murphy L.D."/>
            <person name="Oliver K."/>
            <person name="Quail M.A."/>
            <person name="Rajandream M.A."/>
            <person name="Rutherford K.M."/>
            <person name="Rutter S."/>
            <person name="Seeger K."/>
            <person name="Simon S."/>
            <person name="Simmonds M."/>
            <person name="Skelton J."/>
            <person name="Squares R."/>
            <person name="Squares S."/>
            <person name="Stevens K."/>
            <person name="Taylor K."/>
            <person name="Whitehead S."/>
            <person name="Woodward J.R."/>
            <person name="Barrell B.G."/>
        </authorList>
    </citation>
    <scope>NUCLEOTIDE SEQUENCE [LARGE SCALE GENOMIC DNA]</scope>
    <source>
        <strain>TN</strain>
    </source>
</reference>
<organism>
    <name type="scientific">Mycobacterium leprae (strain TN)</name>
    <dbReference type="NCBI Taxonomy" id="272631"/>
    <lineage>
        <taxon>Bacteria</taxon>
        <taxon>Bacillati</taxon>
        <taxon>Actinomycetota</taxon>
        <taxon>Actinomycetes</taxon>
        <taxon>Mycobacteriales</taxon>
        <taxon>Mycobacteriaceae</taxon>
        <taxon>Mycobacterium</taxon>
    </lineage>
</organism>
<comment type="subcellular location">
    <subcellularLocation>
        <location evidence="2">Cell membrane</location>
        <topology evidence="1">Multi-pass membrane protein</topology>
    </subcellularLocation>
</comment>
<comment type="similarity">
    <text evidence="2">Belongs to the resistance-nodulation-cell division (RND) (TC 2.A.6) family. MmpL subfamily.</text>
</comment>
<comment type="sequence caution" evidence="2">
    <conflict type="erroneous initiation">
        <sequence resource="EMBL-CDS" id="CAC31612"/>
    </conflict>
</comment>
<sequence length="1008" mass="106836">MHPGGAIGGELIFSRLGDIVTRWPWVVIGCWTLLALMLPMTVPSLTELTQRHPVVILPVDAPSSVAAKKISQAFHEVDSENVLIVLLTDDKGLGPADETVYRTLVDRLRNDTKDVVVLQDFLSTPPLHELLVSKDGKAWILPIVLAGELGTSASYQAYAGVAGIVKQTLESTAGSSLKANLTGPASTVADLTDAGARDRTSIELVIAVLLLTILMIIYRNPITMLLPLITIGASLMTAQAVVSGVSVLAGLAVSNQMIVLLSAMIAGAGTDYAVFLISRYHDYIRMGSGSAQDAGCAVRQALISLGKVIAASAATVGITFLGMSFTKIRVFSTVGPALAIGIAVAFLAAVTLMPALLVLAGTRGWVAPRRDRAGAFWRRTGVRIVRRPVAYLSASMVILIVLALCASLVRFNYDDRKQIPASDESSVGYAALESHFPVGQAIPEYLLIQSPHDLRTPRALADMAELAQRVSQIPGIALVRGVTRPTGKPLEETSATYQAGMVGKQLGSASHLIGESTGDLNRLASGAGLLADKLGDVRIQVGQAVAGISGLLDNLAFAQKMFGDSKTLGEIDTAGKLVSSMRALGNMFGINFSTTMNDINWVGAVVIALDSSVLCDTNPICADARAQFHKLLTASEDGTLDNIAHLWKQLGSTQSSQTIGATVSGLEKTLTAVNTSLRSLGLDNPNVMRSKMIGLQNGVNDLASAGRRIADGVAVLVDQTRTMGTSLARASAFLMEMGQDASQPSMAGFNVPPQLLNTEDFKKLVQAFISPDGHSVRYFIQTDLNPFSSAAMDQVNTILNVATGAQPNTTLSDASIYLSGYTVTLRDTRDYYDRDLQLIVIVTMIVVLLILMALLRSIVAPIYLVGSVIVSYLSALGLCVLVFQVLLRQQLHWSVPGLAFVVLVAVGADYNMLLASRLRDESSHGLRASVIRTVRSTGGVITAAGLIFAASMFGLLLSSIATVVQAGFVLGSGILLDTFIVRTITVPAVAALLRRASWWPARPWGNNA</sequence>
<accession>Q49619</accession>
<accession>Q9CC63</accession>
<proteinExistence type="inferred from homology"/>
<dbReference type="EMBL" id="U00010">
    <property type="protein sequence ID" value="AAA17062.1"/>
    <property type="molecule type" value="Genomic_DNA"/>
</dbReference>
<dbReference type="EMBL" id="AL583921">
    <property type="protein sequence ID" value="CAC31612.1"/>
    <property type="status" value="ALT_INIT"/>
    <property type="molecule type" value="Genomic_DNA"/>
</dbReference>
<dbReference type="PIR" id="A87063">
    <property type="entry name" value="A87063"/>
</dbReference>
<dbReference type="PIR" id="S72698">
    <property type="entry name" value="S72698"/>
</dbReference>
<dbReference type="RefSeq" id="WP_010908213.1">
    <property type="nucleotide sequence ID" value="NC_002677.1"/>
</dbReference>
<dbReference type="SMR" id="Q49619"/>
<dbReference type="STRING" id="272631.gene:17575062"/>
<dbReference type="KEGG" id="mle:ML1231"/>
<dbReference type="Leproma" id="ML1231"/>
<dbReference type="eggNOG" id="COG2409">
    <property type="taxonomic scope" value="Bacteria"/>
</dbReference>
<dbReference type="HOGENOM" id="CLU_005108_3_0_11"/>
<dbReference type="Proteomes" id="UP000000806">
    <property type="component" value="Chromosome"/>
</dbReference>
<dbReference type="GO" id="GO:0005886">
    <property type="term" value="C:plasma membrane"/>
    <property type="evidence" value="ECO:0007669"/>
    <property type="project" value="UniProtKB-SubCell"/>
</dbReference>
<dbReference type="FunFam" id="1.20.1640.10:FF:000020">
    <property type="entry name" value="Transmembrane transport protein MmpL10"/>
    <property type="match status" value="1"/>
</dbReference>
<dbReference type="Gene3D" id="1.20.1640.10">
    <property type="entry name" value="Multidrug efflux transporter AcrB transmembrane domain"/>
    <property type="match status" value="2"/>
</dbReference>
<dbReference type="InterPro" id="IPR004869">
    <property type="entry name" value="MMPL_dom"/>
</dbReference>
<dbReference type="InterPro" id="IPR004707">
    <property type="entry name" value="MmpL_fam"/>
</dbReference>
<dbReference type="InterPro" id="IPR050545">
    <property type="entry name" value="Mycobact_MmpL"/>
</dbReference>
<dbReference type="NCBIfam" id="TIGR00833">
    <property type="entry name" value="actII"/>
    <property type="match status" value="1"/>
</dbReference>
<dbReference type="PANTHER" id="PTHR33406">
    <property type="entry name" value="MEMBRANE PROTEIN MJ1562-RELATED"/>
    <property type="match status" value="1"/>
</dbReference>
<dbReference type="PANTHER" id="PTHR33406:SF6">
    <property type="entry name" value="MEMBRANE PROTEIN YDGH-RELATED"/>
    <property type="match status" value="1"/>
</dbReference>
<dbReference type="Pfam" id="PF03176">
    <property type="entry name" value="MMPL"/>
    <property type="match status" value="2"/>
</dbReference>
<dbReference type="SUPFAM" id="SSF82866">
    <property type="entry name" value="Multidrug efflux transporter AcrB transmembrane domain"/>
    <property type="match status" value="2"/>
</dbReference>
<name>MMPLA_MYCLE</name>
<protein>
    <recommendedName>
        <fullName>Probable transport protein MmpL10</fullName>
    </recommendedName>
</protein>